<reference key="1">
    <citation type="journal article" date="2001" name="Science">
        <title>Comparative genomics of Listeria species.</title>
        <authorList>
            <person name="Glaser P."/>
            <person name="Frangeul L."/>
            <person name="Buchrieser C."/>
            <person name="Rusniok C."/>
            <person name="Amend A."/>
            <person name="Baquero F."/>
            <person name="Berche P."/>
            <person name="Bloecker H."/>
            <person name="Brandt P."/>
            <person name="Chakraborty T."/>
            <person name="Charbit A."/>
            <person name="Chetouani F."/>
            <person name="Couve E."/>
            <person name="de Daruvar A."/>
            <person name="Dehoux P."/>
            <person name="Domann E."/>
            <person name="Dominguez-Bernal G."/>
            <person name="Duchaud E."/>
            <person name="Durant L."/>
            <person name="Dussurget O."/>
            <person name="Entian K.-D."/>
            <person name="Fsihi H."/>
            <person name="Garcia-del Portillo F."/>
            <person name="Garrido P."/>
            <person name="Gautier L."/>
            <person name="Goebel W."/>
            <person name="Gomez-Lopez N."/>
            <person name="Hain T."/>
            <person name="Hauf J."/>
            <person name="Jackson D."/>
            <person name="Jones L.-M."/>
            <person name="Kaerst U."/>
            <person name="Kreft J."/>
            <person name="Kuhn M."/>
            <person name="Kunst F."/>
            <person name="Kurapkat G."/>
            <person name="Madueno E."/>
            <person name="Maitournam A."/>
            <person name="Mata Vicente J."/>
            <person name="Ng E."/>
            <person name="Nedjari H."/>
            <person name="Nordsiek G."/>
            <person name="Novella S."/>
            <person name="de Pablos B."/>
            <person name="Perez-Diaz J.-C."/>
            <person name="Purcell R."/>
            <person name="Remmel B."/>
            <person name="Rose M."/>
            <person name="Schlueter T."/>
            <person name="Simoes N."/>
            <person name="Tierrez A."/>
            <person name="Vazquez-Boland J.-A."/>
            <person name="Voss H."/>
            <person name="Wehland J."/>
            <person name="Cossart P."/>
        </authorList>
    </citation>
    <scope>NUCLEOTIDE SEQUENCE [LARGE SCALE GENOMIC DNA]</scope>
    <source>
        <strain>ATCC BAA-679 / EGD-e</strain>
    </source>
</reference>
<proteinExistence type="inferred from homology"/>
<keyword id="KW-0119">Carbohydrate metabolism</keyword>
<keyword id="KW-0963">Cytoplasm</keyword>
<keyword id="KW-0413">Isomerase</keyword>
<keyword id="KW-1185">Reference proteome</keyword>
<keyword id="KW-0684">Rhamnose metabolism</keyword>
<sequence>MERVASIMYLYPGNKEEYKKRHDELWPEMKEALKAHGAANYSIFLDEKTDTLFAYVEVEDKAIYDKIAETEICQKWWKYMAPIMKSNPNNSPVAVDLKEVFYLA</sequence>
<dbReference type="EC" id="5.1.3.32" evidence="1"/>
<dbReference type="EMBL" id="AL591984">
    <property type="protein sequence ID" value="CAD01059.1"/>
    <property type="molecule type" value="Genomic_DNA"/>
</dbReference>
<dbReference type="PIR" id="AE1430">
    <property type="entry name" value="AE1430"/>
</dbReference>
<dbReference type="RefSeq" id="NP_466368.1">
    <property type="nucleotide sequence ID" value="NC_003210.1"/>
</dbReference>
<dbReference type="RefSeq" id="WP_009913470.1">
    <property type="nucleotide sequence ID" value="NZ_CP149495.1"/>
</dbReference>
<dbReference type="SMR" id="Q8Y3I9"/>
<dbReference type="STRING" id="169963.gene:17595564"/>
<dbReference type="PaxDb" id="169963-lmo2846"/>
<dbReference type="EnsemblBacteria" id="CAD01059">
    <property type="protein sequence ID" value="CAD01059"/>
    <property type="gene ID" value="CAD01059"/>
</dbReference>
<dbReference type="GeneID" id="986389"/>
<dbReference type="KEGG" id="lmo:lmo2846"/>
<dbReference type="PATRIC" id="fig|169963.11.peg.2917"/>
<dbReference type="eggNOG" id="COG3254">
    <property type="taxonomic scope" value="Bacteria"/>
</dbReference>
<dbReference type="HOGENOM" id="CLU_100689_2_0_9"/>
<dbReference type="OrthoDB" id="9799608at2"/>
<dbReference type="PhylomeDB" id="Q8Y3I9"/>
<dbReference type="BioCyc" id="LMON169963:LMO2846-MONOMER"/>
<dbReference type="UniPathway" id="UPA00125"/>
<dbReference type="Proteomes" id="UP000000817">
    <property type="component" value="Chromosome"/>
</dbReference>
<dbReference type="GO" id="GO:0005737">
    <property type="term" value="C:cytoplasm"/>
    <property type="evidence" value="ECO:0007669"/>
    <property type="project" value="UniProtKB-SubCell"/>
</dbReference>
<dbReference type="GO" id="GO:0062192">
    <property type="term" value="F:L-rhamnose mutarotase activity"/>
    <property type="evidence" value="ECO:0007669"/>
    <property type="project" value="UniProtKB-EC"/>
</dbReference>
<dbReference type="GO" id="GO:0016857">
    <property type="term" value="F:racemase and epimerase activity, acting on carbohydrates and derivatives"/>
    <property type="evidence" value="ECO:0000318"/>
    <property type="project" value="GO_Central"/>
</dbReference>
<dbReference type="GO" id="GO:0019301">
    <property type="term" value="P:rhamnose catabolic process"/>
    <property type="evidence" value="ECO:0000318"/>
    <property type="project" value="GO_Central"/>
</dbReference>
<dbReference type="Gene3D" id="3.30.70.100">
    <property type="match status" value="1"/>
</dbReference>
<dbReference type="HAMAP" id="MF_01663">
    <property type="entry name" value="L_rham_rotase"/>
    <property type="match status" value="1"/>
</dbReference>
<dbReference type="InterPro" id="IPR011008">
    <property type="entry name" value="Dimeric_a/b-barrel"/>
</dbReference>
<dbReference type="InterPro" id="IPR013448">
    <property type="entry name" value="L-rhamnose_mutarotase"/>
</dbReference>
<dbReference type="InterPro" id="IPR008000">
    <property type="entry name" value="Rham/fucose_mutarotase"/>
</dbReference>
<dbReference type="NCBIfam" id="TIGR02625">
    <property type="entry name" value="YiiL_rotase"/>
    <property type="match status" value="1"/>
</dbReference>
<dbReference type="PANTHER" id="PTHR34389">
    <property type="entry name" value="L-RHAMNOSE MUTAROTASE"/>
    <property type="match status" value="1"/>
</dbReference>
<dbReference type="PANTHER" id="PTHR34389:SF2">
    <property type="entry name" value="L-RHAMNOSE MUTAROTASE"/>
    <property type="match status" value="1"/>
</dbReference>
<dbReference type="Pfam" id="PF05336">
    <property type="entry name" value="rhaM"/>
    <property type="match status" value="1"/>
</dbReference>
<dbReference type="SUPFAM" id="SSF54909">
    <property type="entry name" value="Dimeric alpha+beta barrel"/>
    <property type="match status" value="1"/>
</dbReference>
<gene>
    <name evidence="1" type="primary">rhaM</name>
    <name type="ordered locus">lmo2846</name>
</gene>
<feature type="chain" id="PRO_0000344586" description="L-rhamnose mutarotase">
    <location>
        <begin position="1"/>
        <end position="104"/>
    </location>
</feature>
<feature type="active site" description="Proton donor" evidence="1">
    <location>
        <position position="22"/>
    </location>
</feature>
<feature type="binding site" evidence="1">
    <location>
        <position position="18"/>
    </location>
    <ligand>
        <name>substrate</name>
    </ligand>
</feature>
<feature type="binding site" evidence="1">
    <location>
        <position position="41"/>
    </location>
    <ligand>
        <name>substrate</name>
    </ligand>
</feature>
<feature type="binding site" evidence="1">
    <location>
        <begin position="76"/>
        <end position="77"/>
    </location>
    <ligand>
        <name>substrate</name>
    </ligand>
</feature>
<name>RHAM_LISMO</name>
<protein>
    <recommendedName>
        <fullName evidence="1">L-rhamnose mutarotase</fullName>
        <ecNumber evidence="1">5.1.3.32</ecNumber>
    </recommendedName>
    <alternativeName>
        <fullName evidence="1">Rhamnose 1-epimerase</fullName>
    </alternativeName>
    <alternativeName>
        <fullName evidence="1">Type-3 mutarotase</fullName>
    </alternativeName>
</protein>
<accession>Q8Y3I9</accession>
<evidence type="ECO:0000255" key="1">
    <source>
        <dbReference type="HAMAP-Rule" id="MF_01663"/>
    </source>
</evidence>
<comment type="function">
    <text evidence="1">Involved in the anomeric conversion of L-rhamnose.</text>
</comment>
<comment type="catalytic activity">
    <reaction evidence="1">
        <text>alpha-L-rhamnose = beta-L-rhamnose</text>
        <dbReference type="Rhea" id="RHEA:25584"/>
        <dbReference type="ChEBI" id="CHEBI:27586"/>
        <dbReference type="ChEBI" id="CHEBI:27907"/>
        <dbReference type="EC" id="5.1.3.32"/>
    </reaction>
</comment>
<comment type="pathway">
    <text evidence="1">Carbohydrate metabolism; L-rhamnose metabolism.</text>
</comment>
<comment type="subunit">
    <text evidence="1">Homodimer.</text>
</comment>
<comment type="subcellular location">
    <subcellularLocation>
        <location evidence="1">Cytoplasm</location>
    </subcellularLocation>
</comment>
<comment type="similarity">
    <text evidence="1">Belongs to the rhamnose mutarotase family.</text>
</comment>
<organism>
    <name type="scientific">Listeria monocytogenes serovar 1/2a (strain ATCC BAA-679 / EGD-e)</name>
    <dbReference type="NCBI Taxonomy" id="169963"/>
    <lineage>
        <taxon>Bacteria</taxon>
        <taxon>Bacillati</taxon>
        <taxon>Bacillota</taxon>
        <taxon>Bacilli</taxon>
        <taxon>Bacillales</taxon>
        <taxon>Listeriaceae</taxon>
        <taxon>Listeria</taxon>
    </lineage>
</organism>